<evidence type="ECO:0000255" key="1">
    <source>
        <dbReference type="HAMAP-Rule" id="MF_00836"/>
    </source>
</evidence>
<name>PHNN_PSEFS</name>
<proteinExistence type="inferred from homology"/>
<organism>
    <name type="scientific">Pseudomonas fluorescens (strain SBW25)</name>
    <dbReference type="NCBI Taxonomy" id="216595"/>
    <lineage>
        <taxon>Bacteria</taxon>
        <taxon>Pseudomonadati</taxon>
        <taxon>Pseudomonadota</taxon>
        <taxon>Gammaproteobacteria</taxon>
        <taxon>Pseudomonadales</taxon>
        <taxon>Pseudomonadaceae</taxon>
        <taxon>Pseudomonas</taxon>
    </lineage>
</organism>
<protein>
    <recommendedName>
        <fullName evidence="1">Ribose 1,5-bisphosphate phosphokinase PhnN</fullName>
        <ecNumber evidence="1">2.7.4.23</ecNumber>
    </recommendedName>
    <alternativeName>
        <fullName evidence="1">Ribose 1,5-bisphosphokinase</fullName>
    </alternativeName>
</protein>
<reference key="1">
    <citation type="journal article" date="2009" name="Genome Biol.">
        <title>Genomic and genetic analyses of diversity and plant interactions of Pseudomonas fluorescens.</title>
        <authorList>
            <person name="Silby M.W."/>
            <person name="Cerdeno-Tarraga A.M."/>
            <person name="Vernikos G.S."/>
            <person name="Giddens S.R."/>
            <person name="Jackson R.W."/>
            <person name="Preston G.M."/>
            <person name="Zhang X.-X."/>
            <person name="Moon C.D."/>
            <person name="Gehrig S.M."/>
            <person name="Godfrey S.A.C."/>
            <person name="Knight C.G."/>
            <person name="Malone J.G."/>
            <person name="Robinson Z."/>
            <person name="Spiers A.J."/>
            <person name="Harris S."/>
            <person name="Challis G.L."/>
            <person name="Yaxley A.M."/>
            <person name="Harris D."/>
            <person name="Seeger K."/>
            <person name="Murphy L."/>
            <person name="Rutter S."/>
            <person name="Squares R."/>
            <person name="Quail M.A."/>
            <person name="Saunders E."/>
            <person name="Mavromatis K."/>
            <person name="Brettin T.S."/>
            <person name="Bentley S.D."/>
            <person name="Hothersall J."/>
            <person name="Stephens E."/>
            <person name="Thomas C.M."/>
            <person name="Parkhill J."/>
            <person name="Levy S.B."/>
            <person name="Rainey P.B."/>
            <person name="Thomson N.R."/>
        </authorList>
    </citation>
    <scope>NUCLEOTIDE SEQUENCE [LARGE SCALE GENOMIC DNA]</scope>
    <source>
        <strain>SBW25</strain>
    </source>
</reference>
<sequence>MAGRLIYLIGPSGSGKDSLLDAARPRLAERGCRIVRRVITRSAEAVGEAAQGVSPEQFATMQAEGAFALSWQANGLSYGIPREIDDWLAAGDDVLVNGSRAHLAQTRERYPTLLVLLLTVDQAVLRQRLIARGREALADIEARLARNARFTADLIAGHGAGLFVLDNSGPLAHTVERLLCCLDHGHSACA</sequence>
<dbReference type="EC" id="2.7.4.23" evidence="1"/>
<dbReference type="EMBL" id="AM181176">
    <property type="protein sequence ID" value="CAY48035.1"/>
    <property type="molecule type" value="Genomic_DNA"/>
</dbReference>
<dbReference type="RefSeq" id="WP_012723060.1">
    <property type="nucleotide sequence ID" value="NC_012660.1"/>
</dbReference>
<dbReference type="SMR" id="C3K5M3"/>
<dbReference type="GeneID" id="93463479"/>
<dbReference type="eggNOG" id="COG3709">
    <property type="taxonomic scope" value="Bacteria"/>
</dbReference>
<dbReference type="HOGENOM" id="CLU_102477_0_0_6"/>
<dbReference type="OrthoDB" id="341217at2"/>
<dbReference type="UniPathway" id="UPA00087">
    <property type="reaction ID" value="UER00175"/>
</dbReference>
<dbReference type="GO" id="GO:0005829">
    <property type="term" value="C:cytosol"/>
    <property type="evidence" value="ECO:0007669"/>
    <property type="project" value="TreeGrafter"/>
</dbReference>
<dbReference type="GO" id="GO:0005524">
    <property type="term" value="F:ATP binding"/>
    <property type="evidence" value="ECO:0007669"/>
    <property type="project" value="UniProtKB-KW"/>
</dbReference>
<dbReference type="GO" id="GO:0033863">
    <property type="term" value="F:ribose 1,5-bisphosphate phosphokinase activity"/>
    <property type="evidence" value="ECO:0007669"/>
    <property type="project" value="UniProtKB-UniRule"/>
</dbReference>
<dbReference type="GO" id="GO:0006015">
    <property type="term" value="P:5-phosphoribose 1-diphosphate biosynthetic process"/>
    <property type="evidence" value="ECO:0007669"/>
    <property type="project" value="UniProtKB-UniRule"/>
</dbReference>
<dbReference type="GO" id="GO:0019634">
    <property type="term" value="P:organic phosphonate metabolic process"/>
    <property type="evidence" value="ECO:0007669"/>
    <property type="project" value="UniProtKB-UniRule"/>
</dbReference>
<dbReference type="Gene3D" id="3.40.50.300">
    <property type="entry name" value="P-loop containing nucleotide triphosphate hydrolases"/>
    <property type="match status" value="1"/>
</dbReference>
<dbReference type="HAMAP" id="MF_00836">
    <property type="entry name" value="PhnN"/>
    <property type="match status" value="1"/>
</dbReference>
<dbReference type="InterPro" id="IPR008145">
    <property type="entry name" value="GK/Ca_channel_bsu"/>
</dbReference>
<dbReference type="InterPro" id="IPR027417">
    <property type="entry name" value="P-loop_NTPase"/>
</dbReference>
<dbReference type="InterPro" id="IPR012699">
    <property type="entry name" value="PhnN"/>
</dbReference>
<dbReference type="NCBIfam" id="TIGR02322">
    <property type="entry name" value="phosphon_PhnN"/>
    <property type="match status" value="1"/>
</dbReference>
<dbReference type="NCBIfam" id="NF007485">
    <property type="entry name" value="PRK10078.1"/>
    <property type="match status" value="1"/>
</dbReference>
<dbReference type="PANTHER" id="PTHR23117">
    <property type="entry name" value="GUANYLATE KINASE-RELATED"/>
    <property type="match status" value="1"/>
</dbReference>
<dbReference type="PANTHER" id="PTHR23117:SF8">
    <property type="entry name" value="RIBOSE 1,5-BISPHOSPHATE PHOSPHOKINASE PHNN"/>
    <property type="match status" value="1"/>
</dbReference>
<dbReference type="SMART" id="SM00072">
    <property type="entry name" value="GuKc"/>
    <property type="match status" value="1"/>
</dbReference>
<dbReference type="SUPFAM" id="SSF52540">
    <property type="entry name" value="P-loop containing nucleoside triphosphate hydrolases"/>
    <property type="match status" value="1"/>
</dbReference>
<feature type="chain" id="PRO_0000412795" description="Ribose 1,5-bisphosphate phosphokinase PhnN">
    <location>
        <begin position="1"/>
        <end position="190"/>
    </location>
</feature>
<feature type="binding site" evidence="1">
    <location>
        <begin position="10"/>
        <end position="17"/>
    </location>
    <ligand>
        <name>ATP</name>
        <dbReference type="ChEBI" id="CHEBI:30616"/>
    </ligand>
</feature>
<keyword id="KW-0067">ATP-binding</keyword>
<keyword id="KW-0547">Nucleotide-binding</keyword>
<keyword id="KW-0808">Transferase</keyword>
<comment type="function">
    <text evidence="1">Catalyzes the phosphorylation of ribose 1,5-bisphosphate to 5-phospho-D-ribosyl alpha-1-diphosphate (PRPP).</text>
</comment>
<comment type="catalytic activity">
    <reaction evidence="1">
        <text>alpha-D-ribose 1,5-bisphosphate + ATP = 5-phospho-alpha-D-ribose 1-diphosphate + ADP</text>
        <dbReference type="Rhea" id="RHEA:20109"/>
        <dbReference type="ChEBI" id="CHEBI:30616"/>
        <dbReference type="ChEBI" id="CHEBI:58017"/>
        <dbReference type="ChEBI" id="CHEBI:68688"/>
        <dbReference type="ChEBI" id="CHEBI:456216"/>
        <dbReference type="EC" id="2.7.4.23"/>
    </reaction>
</comment>
<comment type="pathway">
    <text evidence="1">Metabolic intermediate biosynthesis; 5-phospho-alpha-D-ribose 1-diphosphate biosynthesis; 5-phospho-alpha-D-ribose 1-diphosphate from D-ribose 5-phosphate (route II): step 3/3.</text>
</comment>
<comment type="similarity">
    <text evidence="1">Belongs to the ribose 1,5-bisphosphokinase family.</text>
</comment>
<gene>
    <name evidence="1" type="primary">phnN</name>
    <name type="ordered locus">PFLU_1788</name>
</gene>
<accession>C3K5M3</accession>